<accession>Q9SCU9</accession>
<accession>Q9SLE5</accession>
<organism>
    <name type="scientific">Arabidopsis thaliana</name>
    <name type="common">Mouse-ear cress</name>
    <dbReference type="NCBI Taxonomy" id="3702"/>
    <lineage>
        <taxon>Eukaryota</taxon>
        <taxon>Viridiplantae</taxon>
        <taxon>Streptophyta</taxon>
        <taxon>Embryophyta</taxon>
        <taxon>Tracheophyta</taxon>
        <taxon>Spermatophyta</taxon>
        <taxon>Magnoliopsida</taxon>
        <taxon>eudicotyledons</taxon>
        <taxon>Gunneridae</taxon>
        <taxon>Pentapetalae</taxon>
        <taxon>rosids</taxon>
        <taxon>malvids</taxon>
        <taxon>Brassicales</taxon>
        <taxon>Brassicaceae</taxon>
        <taxon>Camelineae</taxon>
        <taxon>Arabidopsis</taxon>
    </lineage>
</organism>
<name>BGA13_ARATH</name>
<reference key="1">
    <citation type="submission" date="1999-10" db="EMBL/GenBank/DDBJ databases">
        <title>The beta-galactosidases are encoding by a multigene family in Arabidopsis thaliana.</title>
        <authorList>
            <person name="Gy I."/>
            <person name="Kreis M."/>
            <person name="Lecharny A."/>
        </authorList>
    </citation>
    <scope>NUCLEOTIDE SEQUENCE [MRNA]</scope>
</reference>
<reference key="2">
    <citation type="journal article" date="1999" name="Nature">
        <title>Sequence and analysis of chromosome 2 of the plant Arabidopsis thaliana.</title>
        <authorList>
            <person name="Lin X."/>
            <person name="Kaul S."/>
            <person name="Rounsley S.D."/>
            <person name="Shea T.P."/>
            <person name="Benito M.-I."/>
            <person name="Town C.D."/>
            <person name="Fujii C.Y."/>
            <person name="Mason T.M."/>
            <person name="Bowman C.L."/>
            <person name="Barnstead M.E."/>
            <person name="Feldblyum T.V."/>
            <person name="Buell C.R."/>
            <person name="Ketchum K.A."/>
            <person name="Lee J.J."/>
            <person name="Ronning C.M."/>
            <person name="Koo H.L."/>
            <person name="Moffat K.S."/>
            <person name="Cronin L.A."/>
            <person name="Shen M."/>
            <person name="Pai G."/>
            <person name="Van Aken S."/>
            <person name="Umayam L."/>
            <person name="Tallon L.J."/>
            <person name="Gill J.E."/>
            <person name="Adams M.D."/>
            <person name="Carrera A.J."/>
            <person name="Creasy T.H."/>
            <person name="Goodman H.M."/>
            <person name="Somerville C.R."/>
            <person name="Copenhaver G.P."/>
            <person name="Preuss D."/>
            <person name="Nierman W.C."/>
            <person name="White O."/>
            <person name="Eisen J.A."/>
            <person name="Salzberg S.L."/>
            <person name="Fraser C.M."/>
            <person name="Venter J.C."/>
        </authorList>
    </citation>
    <scope>NUCLEOTIDE SEQUENCE [LARGE SCALE GENOMIC DNA]</scope>
    <source>
        <strain>cv. Columbia</strain>
    </source>
</reference>
<reference key="3">
    <citation type="journal article" date="2017" name="Plant J.">
        <title>Araport11: a complete reannotation of the Arabidopsis thaliana reference genome.</title>
        <authorList>
            <person name="Cheng C.Y."/>
            <person name="Krishnakumar V."/>
            <person name="Chan A.P."/>
            <person name="Thibaud-Nissen F."/>
            <person name="Schobel S."/>
            <person name="Town C.D."/>
        </authorList>
    </citation>
    <scope>GENOME REANNOTATION</scope>
    <source>
        <strain>cv. Columbia</strain>
    </source>
</reference>
<reference key="4">
    <citation type="journal article" date="2006" name="Plant Cell Physiol.">
        <title>Apoplastic glycosidases active against xyloglucan oligosaccharides of Arabidopsis thaliana.</title>
        <authorList>
            <person name="Iglesias N."/>
            <person name="Abelenda J.A."/>
            <person name="Rodino M."/>
            <person name="Sampedro J."/>
            <person name="Revilla G."/>
            <person name="Zarra I."/>
        </authorList>
    </citation>
    <scope>TISSUE SPECIFICITY</scope>
</reference>
<reference key="5">
    <citation type="journal article" date="2007" name="Phytochemistry">
        <title>Functional genomic analysis of Arabidopsis thaliana glycoside hydrolase family 35.</title>
        <authorList>
            <person name="Ahn Y.O."/>
            <person name="Zheng M."/>
            <person name="Bevan D.R."/>
            <person name="Esen A."/>
            <person name="Shiu S.-H."/>
            <person name="Benson J."/>
            <person name="Peng H.-P."/>
            <person name="Miller J.T."/>
            <person name="Cheng C.-L."/>
            <person name="Poulton J.E."/>
            <person name="Shih M.-C."/>
        </authorList>
    </citation>
    <scope>GENE FAMILY</scope>
    <scope>NOMENCLATURE</scope>
</reference>
<comment type="catalytic activity">
    <reaction>
        <text>Hydrolysis of terminal non-reducing beta-D-galactose residues in beta-D-galactosides.</text>
        <dbReference type="EC" id="3.2.1.23"/>
    </reaction>
</comment>
<comment type="subcellular location">
    <subcellularLocation>
        <location evidence="4">Secreted</location>
        <location evidence="4">Extracellular space</location>
        <location evidence="4">Apoplast</location>
    </subcellularLocation>
</comment>
<comment type="tissue specificity">
    <text evidence="3">Ubiquitous, with higher expression levels in roots, flowers and siliques.</text>
</comment>
<comment type="similarity">
    <text evidence="4">Belongs to the glycosyl hydrolase 35 family.</text>
</comment>
<comment type="sequence caution" evidence="4">
    <conflict type="erroneous gene model prediction">
        <sequence resource="EMBL-CDS" id="AAD24606"/>
    </conflict>
</comment>
<keyword id="KW-0052">Apoplast</keyword>
<keyword id="KW-0325">Glycoprotein</keyword>
<keyword id="KW-0326">Glycosidase</keyword>
<keyword id="KW-0378">Hydrolase</keyword>
<keyword id="KW-1185">Reference proteome</keyword>
<keyword id="KW-0964">Secreted</keyword>
<keyword id="KW-0732">Signal</keyword>
<dbReference type="EC" id="3.2.1.23"/>
<dbReference type="EMBL" id="AJ270309">
    <property type="protein sequence ID" value="CAB64749.1"/>
    <property type="molecule type" value="mRNA"/>
</dbReference>
<dbReference type="EMBL" id="AC005825">
    <property type="protein sequence ID" value="AAD24606.1"/>
    <property type="status" value="ALT_SEQ"/>
    <property type="molecule type" value="Genomic_DNA"/>
</dbReference>
<dbReference type="EMBL" id="CP002685">
    <property type="protein sequence ID" value="AEC06532.1"/>
    <property type="molecule type" value="Genomic_DNA"/>
</dbReference>
<dbReference type="PIR" id="E84543">
    <property type="entry name" value="E84543"/>
</dbReference>
<dbReference type="RefSeq" id="NP_179264.2">
    <property type="nucleotide sequence ID" value="NM_127225.3"/>
</dbReference>
<dbReference type="SMR" id="Q9SCU9"/>
<dbReference type="FunCoup" id="Q9SCU9">
    <property type="interactions" value="13"/>
</dbReference>
<dbReference type="STRING" id="3702.Q9SCU9"/>
<dbReference type="CAZy" id="GH35">
    <property type="family name" value="Glycoside Hydrolase Family 35"/>
</dbReference>
<dbReference type="GlyCosmos" id="Q9SCU9">
    <property type="glycosylation" value="8 sites, No reported glycans"/>
</dbReference>
<dbReference type="GlyGen" id="Q9SCU9">
    <property type="glycosylation" value="8 sites"/>
</dbReference>
<dbReference type="PaxDb" id="3702-AT2G16730.1"/>
<dbReference type="ProteomicsDB" id="240461"/>
<dbReference type="EnsemblPlants" id="AT2G16730.1">
    <property type="protein sequence ID" value="AT2G16730.1"/>
    <property type="gene ID" value="AT2G16730"/>
</dbReference>
<dbReference type="GeneID" id="816174"/>
<dbReference type="Gramene" id="AT2G16730.1">
    <property type="protein sequence ID" value="AT2G16730.1"/>
    <property type="gene ID" value="AT2G16730"/>
</dbReference>
<dbReference type="KEGG" id="ath:AT2G16730"/>
<dbReference type="Araport" id="AT2G16730"/>
<dbReference type="TAIR" id="AT2G16730">
    <property type="gene designation" value="BGAL13"/>
</dbReference>
<dbReference type="eggNOG" id="KOG0496">
    <property type="taxonomic scope" value="Eukaryota"/>
</dbReference>
<dbReference type="HOGENOM" id="CLU_007853_4_0_1"/>
<dbReference type="InParanoid" id="Q9SCU9"/>
<dbReference type="OMA" id="HWTRKND"/>
<dbReference type="PhylomeDB" id="Q9SCU9"/>
<dbReference type="BioCyc" id="ARA:AT2G16730-MONOMER"/>
<dbReference type="PRO" id="PR:Q9SCU9"/>
<dbReference type="Proteomes" id="UP000006548">
    <property type="component" value="Chromosome 2"/>
</dbReference>
<dbReference type="ExpressionAtlas" id="Q9SCU9">
    <property type="expression patterns" value="baseline and differential"/>
</dbReference>
<dbReference type="GO" id="GO:0048046">
    <property type="term" value="C:apoplast"/>
    <property type="evidence" value="ECO:0007669"/>
    <property type="project" value="UniProtKB-SubCell"/>
</dbReference>
<dbReference type="GO" id="GO:0004565">
    <property type="term" value="F:beta-galactosidase activity"/>
    <property type="evidence" value="ECO:0000304"/>
    <property type="project" value="TAIR"/>
</dbReference>
<dbReference type="GO" id="GO:0030246">
    <property type="term" value="F:carbohydrate binding"/>
    <property type="evidence" value="ECO:0007669"/>
    <property type="project" value="InterPro"/>
</dbReference>
<dbReference type="GO" id="GO:0005975">
    <property type="term" value="P:carbohydrate metabolic process"/>
    <property type="evidence" value="ECO:0007669"/>
    <property type="project" value="InterPro"/>
</dbReference>
<dbReference type="CDD" id="cd22842">
    <property type="entry name" value="Gal_Rha_Lectin_BGal"/>
    <property type="match status" value="1"/>
</dbReference>
<dbReference type="FunFam" id="2.60.120.260:FF:000050">
    <property type="entry name" value="Beta-galactosidase"/>
    <property type="match status" value="1"/>
</dbReference>
<dbReference type="FunFam" id="2.60.120.260:FF:000156">
    <property type="entry name" value="Beta-galactosidase"/>
    <property type="match status" value="1"/>
</dbReference>
<dbReference type="FunFam" id="2.60.120.740:FF:000002">
    <property type="entry name" value="Beta-galactosidase"/>
    <property type="match status" value="1"/>
</dbReference>
<dbReference type="FunFam" id="3.20.20.80:FF:000006">
    <property type="entry name" value="Beta-galactosidase"/>
    <property type="match status" value="1"/>
</dbReference>
<dbReference type="Gene3D" id="2.60.120.740">
    <property type="match status" value="1"/>
</dbReference>
<dbReference type="Gene3D" id="2.60.120.260">
    <property type="entry name" value="Galactose-binding domain-like"/>
    <property type="match status" value="2"/>
</dbReference>
<dbReference type="Gene3D" id="3.20.20.80">
    <property type="entry name" value="Glycosidases"/>
    <property type="match status" value="1"/>
</dbReference>
<dbReference type="InterPro" id="IPR048913">
    <property type="entry name" value="BetaGal_gal-bd"/>
</dbReference>
<dbReference type="InterPro" id="IPR008979">
    <property type="entry name" value="Galactose-bd-like_sf"/>
</dbReference>
<dbReference type="InterPro" id="IPR041392">
    <property type="entry name" value="GHD"/>
</dbReference>
<dbReference type="InterPro" id="IPR031330">
    <property type="entry name" value="Gly_Hdrlase_35_cat"/>
</dbReference>
<dbReference type="InterPro" id="IPR019801">
    <property type="entry name" value="Glyco_hydro_35_CS"/>
</dbReference>
<dbReference type="InterPro" id="IPR001944">
    <property type="entry name" value="Glycoside_Hdrlase_35"/>
</dbReference>
<dbReference type="InterPro" id="IPR017853">
    <property type="entry name" value="Glycoside_hydrolase_SF"/>
</dbReference>
<dbReference type="InterPro" id="IPR000922">
    <property type="entry name" value="Lectin_gal-bd_dom"/>
</dbReference>
<dbReference type="InterPro" id="IPR043159">
    <property type="entry name" value="Lectin_gal-bd_sf"/>
</dbReference>
<dbReference type="PANTHER" id="PTHR23421">
    <property type="entry name" value="BETA-GALACTOSIDASE RELATED"/>
    <property type="match status" value="1"/>
</dbReference>
<dbReference type="Pfam" id="PF21467">
    <property type="entry name" value="BetaGal_gal-bd"/>
    <property type="match status" value="1"/>
</dbReference>
<dbReference type="Pfam" id="PF17834">
    <property type="entry name" value="GHD"/>
    <property type="match status" value="1"/>
</dbReference>
<dbReference type="Pfam" id="PF01301">
    <property type="entry name" value="Glyco_hydro_35"/>
    <property type="match status" value="1"/>
</dbReference>
<dbReference type="Pfam" id="PF02140">
    <property type="entry name" value="SUEL_Lectin"/>
    <property type="match status" value="1"/>
</dbReference>
<dbReference type="PRINTS" id="PR00742">
    <property type="entry name" value="GLHYDRLASE35"/>
</dbReference>
<dbReference type="SUPFAM" id="SSF51445">
    <property type="entry name" value="(Trans)glycosidases"/>
    <property type="match status" value="1"/>
</dbReference>
<dbReference type="SUPFAM" id="SSF49785">
    <property type="entry name" value="Galactose-binding domain-like"/>
    <property type="match status" value="2"/>
</dbReference>
<dbReference type="PROSITE" id="PS01182">
    <property type="entry name" value="GLYCOSYL_HYDROL_F35"/>
    <property type="match status" value="1"/>
</dbReference>
<dbReference type="PROSITE" id="PS50228">
    <property type="entry name" value="SUEL_LECTIN"/>
    <property type="match status" value="1"/>
</dbReference>
<gene>
    <name type="primary">BGAL13</name>
    <name type="ordered locus">At2g16730</name>
    <name type="ORF">T24I21.14</name>
</gene>
<sequence length="848" mass="95900">MKIHSSDHSWLLLAVLVILLSFSGALSSDDKEKKTKSVDKKKEVTYDGTSLIINGNRELLYSGSIHYPRSTPEMWPNIIKRAKQGGLNTIQTYVFWNVHEPEQGKFNFSGRADLVKFIKLIEKNGLYVTLRLGPFIQAEWTHGGLPYWLREVPGIFFRTDNEPFKEHTERYVKVVLDMMKEEKLFASQGGPIILGQIENEYSAVQRAYKEDGLNYIKWASKLVHSMDLGIPWVMCKQNDAPDPMINACNGRHCGDTFPGPNKDNKPSLWTENWTTQFRVFGDPPAQRSVEDIAYSVARFFSKNGTHVNYYMYHGGTNFGRTSAHYVTTRYYDDAPLDEFGLEREPKYGHLKHLHNALNLCKKALLWGQPRVEKPSNETEIRYYEQPGTKVCAAFLANNNTEAAEKIKFRGKEYLIPHRSISILPDCKTVVYNTGEIISHHTSRNFMKSKKANKNFDFKVFTESVPSKIKGDSFIPVELYGLTKDESDYGWYTTSFKIDDNDLSKKKGGKPNLRIASLGHALHVWLNGEYLGNGHGSHEEKSFVFQKPVTLKEGENHLTMLGVLTGFPDSGSYMEHRYTGPRSVSILGLGSGTLDLTEENKWGNKVGMEGERLGIHAEEGLKKVKWEKASGKEPGMTWYQTYFDAPESQSAAAIRMNGMGKGLIWVNGEGVGRYWMSFLSPLGQPTQIEYHIPRSFLKPKKNLLVIFEEEPNVKPELIDFVIVNRDTVCSYIGENYTPSVRHWTRKNDQVQAITDDVHLTANLKCSGTKKISAVEFASFGNPNGTCGNFTLGSCNAPVSKKVVEKYCLGKAECVIPVNKSTFEQDKKDSCPKVEKKLAVQVKCGRDKKN</sequence>
<proteinExistence type="evidence at transcript level"/>
<evidence type="ECO:0000255" key="1"/>
<evidence type="ECO:0000255" key="2">
    <source>
        <dbReference type="PROSITE-ProRule" id="PRU00260"/>
    </source>
</evidence>
<evidence type="ECO:0000269" key="3">
    <source>
    </source>
</evidence>
<evidence type="ECO:0000305" key="4"/>
<protein>
    <recommendedName>
        <fullName>Beta-galactosidase 13</fullName>
        <shortName>Lactase 13</shortName>
        <ecNumber>3.2.1.23</ecNumber>
    </recommendedName>
</protein>
<feature type="signal peptide" evidence="1">
    <location>
        <begin position="1"/>
        <end position="27"/>
    </location>
</feature>
<feature type="chain" id="PRO_5000065886" description="Beta-galactosidase 13">
    <location>
        <begin position="28"/>
        <end position="848"/>
    </location>
</feature>
<feature type="domain" description="SUEL-type lectin" evidence="2">
    <location>
        <begin position="754"/>
        <end position="843"/>
    </location>
</feature>
<feature type="active site" description="Proton donor" evidence="1">
    <location>
        <position position="200"/>
    </location>
</feature>
<feature type="active site" description="Nucleophile" evidence="1">
    <location>
        <position position="271"/>
    </location>
</feature>
<feature type="glycosylation site" description="N-linked (GlcNAc...) asparagine" evidence="1">
    <location>
        <position position="107"/>
    </location>
</feature>
<feature type="glycosylation site" description="N-linked (GlcNAc...) asparagine" evidence="1">
    <location>
        <position position="272"/>
    </location>
</feature>
<feature type="glycosylation site" description="N-linked (GlcNAc...) asparagine" evidence="1">
    <location>
        <position position="303"/>
    </location>
</feature>
<feature type="glycosylation site" description="N-linked (GlcNAc...) asparagine" evidence="1">
    <location>
        <position position="376"/>
    </location>
</feature>
<feature type="glycosylation site" description="N-linked (GlcNAc...) asparagine" evidence="1">
    <location>
        <position position="398"/>
    </location>
</feature>
<feature type="glycosylation site" description="N-linked (GlcNAc...) asparagine" evidence="1">
    <location>
        <position position="782"/>
    </location>
</feature>
<feature type="glycosylation site" description="N-linked (GlcNAc...) asparagine" evidence="1">
    <location>
        <position position="787"/>
    </location>
</feature>
<feature type="glycosylation site" description="N-linked (GlcNAc...) asparagine" evidence="1">
    <location>
        <position position="817"/>
    </location>
</feature>